<comment type="function">
    <text evidence="5">Mediates bacteriorhodopsin- and halorhodopsin-dependent photoresponses by detecting membrane potential changes. Probably transduces the signal to the histidine kinase CheA.</text>
</comment>
<comment type="subunit">
    <text evidence="7">Interacts with CheA, CheY and CheW1.</text>
</comment>
<comment type="subcellular location">
    <subcellularLocation>
        <location evidence="9">Cell membrane</location>
        <topology evidence="9">Multi-pass membrane protein</topology>
    </subcellularLocation>
</comment>
<comment type="PTM">
    <text evidence="5 6">Methylated by CheR.</text>
</comment>
<comment type="disruption phenotype">
    <text evidence="5">Deletion abolishes bacteriorhodopsin- and halorhodopsin-dependent phototaxis.</text>
</comment>
<comment type="similarity">
    <text evidence="8">Belongs to the methyl-accepting chemotaxis (MCP) protein family.</text>
</comment>
<name>MPCT_HALS3</name>
<dbReference type="EMBL" id="AM774415">
    <property type="protein sequence ID" value="CAP13179.1"/>
    <property type="molecule type" value="Genomic_DNA"/>
</dbReference>
<dbReference type="RefSeq" id="WP_010902217.1">
    <property type="nucleotide sequence ID" value="NC_010364.1"/>
</dbReference>
<dbReference type="SMR" id="B0R367"/>
<dbReference type="EnsemblBacteria" id="CAP13179">
    <property type="protein sequence ID" value="CAP13179"/>
    <property type="gene ID" value="OE_1536R"/>
</dbReference>
<dbReference type="GeneID" id="68693291"/>
<dbReference type="KEGG" id="hsl:OE_1536R"/>
<dbReference type="HOGENOM" id="CLU_000445_107_18_2"/>
<dbReference type="PhylomeDB" id="B0R367"/>
<dbReference type="Proteomes" id="UP000001321">
    <property type="component" value="Chromosome"/>
</dbReference>
<dbReference type="GO" id="GO:0005886">
    <property type="term" value="C:plasma membrane"/>
    <property type="evidence" value="ECO:0007669"/>
    <property type="project" value="UniProtKB-SubCell"/>
</dbReference>
<dbReference type="GO" id="GO:0004888">
    <property type="term" value="F:transmembrane signaling receptor activity"/>
    <property type="evidence" value="ECO:0007669"/>
    <property type="project" value="InterPro"/>
</dbReference>
<dbReference type="GO" id="GO:0006935">
    <property type="term" value="P:chemotaxis"/>
    <property type="evidence" value="ECO:0007669"/>
    <property type="project" value="UniProtKB-KW"/>
</dbReference>
<dbReference type="GO" id="GO:0007165">
    <property type="term" value="P:signal transduction"/>
    <property type="evidence" value="ECO:0007669"/>
    <property type="project" value="UniProtKB-KW"/>
</dbReference>
<dbReference type="CDD" id="cd06225">
    <property type="entry name" value="HAMP"/>
    <property type="match status" value="1"/>
</dbReference>
<dbReference type="Gene3D" id="1.10.8.500">
    <property type="entry name" value="HAMP domain in histidine kinase"/>
    <property type="match status" value="1"/>
</dbReference>
<dbReference type="Gene3D" id="1.10.287.950">
    <property type="entry name" value="Methyl-accepting chemotaxis protein"/>
    <property type="match status" value="1"/>
</dbReference>
<dbReference type="InterPro" id="IPR004090">
    <property type="entry name" value="Chemotax_Me-accpt_rcpt"/>
</dbReference>
<dbReference type="InterPro" id="IPR003660">
    <property type="entry name" value="HAMP_dom"/>
</dbReference>
<dbReference type="InterPro" id="IPR004089">
    <property type="entry name" value="MCPsignal_dom"/>
</dbReference>
<dbReference type="PANTHER" id="PTHR32089:SF112">
    <property type="entry name" value="LYSOZYME-LIKE PROTEIN-RELATED"/>
    <property type="match status" value="1"/>
</dbReference>
<dbReference type="PANTHER" id="PTHR32089">
    <property type="entry name" value="METHYL-ACCEPTING CHEMOTAXIS PROTEIN MCPB"/>
    <property type="match status" value="1"/>
</dbReference>
<dbReference type="Pfam" id="PF00672">
    <property type="entry name" value="HAMP"/>
    <property type="match status" value="1"/>
</dbReference>
<dbReference type="Pfam" id="PF00015">
    <property type="entry name" value="MCPsignal"/>
    <property type="match status" value="1"/>
</dbReference>
<dbReference type="PRINTS" id="PR00260">
    <property type="entry name" value="CHEMTRNSDUCR"/>
</dbReference>
<dbReference type="SMART" id="SM00304">
    <property type="entry name" value="HAMP"/>
    <property type="match status" value="3"/>
</dbReference>
<dbReference type="SMART" id="SM00283">
    <property type="entry name" value="MA"/>
    <property type="match status" value="1"/>
</dbReference>
<dbReference type="SUPFAM" id="SSF158472">
    <property type="entry name" value="HAMP domain-like"/>
    <property type="match status" value="1"/>
</dbReference>
<dbReference type="SUPFAM" id="SSF58104">
    <property type="entry name" value="Methyl-accepting chemotaxis protein (MCP) signaling domain"/>
    <property type="match status" value="1"/>
</dbReference>
<dbReference type="PROSITE" id="PS50111">
    <property type="entry name" value="CHEMOTAXIS_TRANSDUC_2"/>
    <property type="match status" value="1"/>
</dbReference>
<dbReference type="PROSITE" id="PS50885">
    <property type="entry name" value="HAMP"/>
    <property type="match status" value="2"/>
</dbReference>
<gene>
    <name type="primary">mpcT</name>
    <name type="synonym">htr14</name>
    <name type="ordered locus">OE_1536R</name>
</gene>
<protein>
    <recommendedName>
        <fullName>Transducer protein MpcT</fullName>
    </recommendedName>
    <alternativeName>
        <fullName>Membrane potential change transducer protein</fullName>
    </alternativeName>
</protein>
<feature type="chain" id="PRO_0000428992" description="Transducer protein MpcT">
    <location>
        <begin position="1"/>
        <end position="627"/>
    </location>
</feature>
<feature type="transmembrane region" description="Helical" evidence="1">
    <location>
        <begin position="28"/>
        <end position="48"/>
    </location>
</feature>
<feature type="transmembrane region" description="Helical" evidence="1">
    <location>
        <begin position="55"/>
        <end position="75"/>
    </location>
</feature>
<feature type="domain" description="HAMP 1" evidence="2">
    <location>
        <begin position="78"/>
        <end position="132"/>
    </location>
</feature>
<feature type="domain" description="HAMP 2" evidence="2">
    <location>
        <begin position="192"/>
        <end position="247"/>
    </location>
</feature>
<feature type="domain" description="Methyl-accepting transducer" evidence="3">
    <location>
        <begin position="266"/>
        <end position="502"/>
    </location>
</feature>
<feature type="region of interest" description="Disordered" evidence="4">
    <location>
        <begin position="505"/>
        <end position="527"/>
    </location>
</feature>
<feature type="region of interest" description="Disordered" evidence="4">
    <location>
        <begin position="557"/>
        <end position="627"/>
    </location>
</feature>
<feature type="compositionally biased region" description="Low complexity" evidence="4">
    <location>
        <begin position="580"/>
        <end position="590"/>
    </location>
</feature>
<feature type="modified residue" description="Glutamate methyl ester (Glu)" evidence="6">
    <location>
        <position position="310"/>
    </location>
</feature>
<feature type="modified residue" description="Glutamate methyl ester (Glu)" evidence="6">
    <location>
        <position position="416"/>
    </location>
</feature>
<feature type="modified residue" description="Glutamate methyl ester (Glu)" evidence="6">
    <location>
        <position position="507"/>
    </location>
</feature>
<accession>B0R367</accession>
<sequence>MNITQAYKRSLWWSMDMVGATGSVERKMLTAVGLQFLAAGGMAFLTVFTAGTVQLIGVGGMLALSVVAFYNTYLIAEADFVEPLVALEDAADDIAAGEFERADIPSSKRDDEIASLVASFDGMQSNLEVASRQADALARQAFDDPALDESVPGAFGESITEMADSLEAYTAELEDKTAELEHQQAELERQSEQLRALVDALSEATDAARAGDLTATVDAAALDVTDDHRAAVEDFNQLLETLADTISDIQSFSDAVLAVSRTTDERVDAVADRSAAVSESVTEIADGANQQTNQLNNIAAEMDTVSATVEEIAASANDVAKTAQAAADRGEDGRGEVEETIEALRALREQSQAVAETVESLAAEVERIDGITALIEDIAEETNMLALNASIEAARTGSDGDGFAVVADEVKDLAEETREQAADISEIVDAVTEKAEDASIAIGEVDAEVERKITKAEGVLRDFEAIVDEVANVNHAVQEISDATDQGAQSVTDVVGMVEEVASVSEETAAESDTVADNAAEQTDATDEVADQMDELAEQTAALAGMLDDFTVPADAGTADQSVADDSPTAQPPAADDEPAAAVVDQPQPASDAEDEEGVPDSGGESVAVSDGGWADDRSSFTWADSQ</sequence>
<evidence type="ECO:0000255" key="1"/>
<evidence type="ECO:0000255" key="2">
    <source>
        <dbReference type="PROSITE-ProRule" id="PRU00102"/>
    </source>
</evidence>
<evidence type="ECO:0000255" key="3">
    <source>
        <dbReference type="PROSITE-ProRule" id="PRU00284"/>
    </source>
</evidence>
<evidence type="ECO:0000256" key="4">
    <source>
        <dbReference type="SAM" id="MobiDB-lite"/>
    </source>
</evidence>
<evidence type="ECO:0000269" key="5">
    <source>
    </source>
</evidence>
<evidence type="ECO:0000269" key="6">
    <source>
    </source>
</evidence>
<evidence type="ECO:0000269" key="7">
    <source>
    </source>
</evidence>
<evidence type="ECO:0000305" key="8"/>
<evidence type="ECO:0000305" key="9">
    <source>
    </source>
</evidence>
<reference key="1">
    <citation type="journal article" date="2008" name="Genomics">
        <title>Evolution in the laboratory: the genome of Halobacterium salinarum strain R1 compared to that of strain NRC-1.</title>
        <authorList>
            <person name="Pfeiffer F."/>
            <person name="Schuster S.C."/>
            <person name="Broicher A."/>
            <person name="Falb M."/>
            <person name="Palm P."/>
            <person name="Rodewald K."/>
            <person name="Ruepp A."/>
            <person name="Soppa J."/>
            <person name="Tittor J."/>
            <person name="Oesterhelt D."/>
        </authorList>
    </citation>
    <scope>NUCLEOTIDE SEQUENCE [LARGE SCALE GENOMIC DNA]</scope>
    <source>
        <strain>ATCC 29341 / DSM 671 / R1</strain>
    </source>
</reference>
<reference key="2">
    <citation type="journal article" date="2005" name="Mol. Microbiol.">
        <title>MpcT is the transducer for membrane potential changes in Halobacterium salinarum.</title>
        <authorList>
            <person name="Koch M.K."/>
            <person name="Oesterhelt D."/>
        </authorList>
    </citation>
    <scope>FUNCTION</scope>
    <scope>SUBCELLULAR LOCATION</scope>
    <scope>METHYLATION</scope>
    <scope>DISRUPTION PHENOTYPE</scope>
    <scope>GENE NAME</scope>
    <source>
        <strain>R1 / S9 / L33</strain>
    </source>
</reference>
<reference key="3">
    <citation type="journal article" date="2008" name="J. Mol. Biol.">
        <title>Physiological sites of deamidation and methyl esterification in sensory transducers of Halobacterium salinarum.</title>
        <authorList>
            <person name="Koch M.K."/>
            <person name="Staudinger W.F."/>
            <person name="Siedler F."/>
            <person name="Oesterhelt D."/>
        </authorList>
    </citation>
    <scope>METHYLATION AT GLU-310; GLU-416 AND GLU-507</scope>
    <source>
        <strain>R1 / S9</strain>
    </source>
</reference>
<reference key="4">
    <citation type="journal article" date="2012" name="BMC Microbiol.">
        <title>The protein interaction network of a taxis signal transduction system in a halophilic archaeon.</title>
        <authorList>
            <person name="Schlesner M."/>
            <person name="Miller A."/>
            <person name="Besir H."/>
            <person name="Aivaliotis M."/>
            <person name="Streif J."/>
            <person name="Scheffer B."/>
            <person name="Siedler F."/>
            <person name="Oesterhelt D."/>
        </authorList>
    </citation>
    <scope>INTERACTION WITH CHEA; CHEY AND CHEW1</scope>
    <source>
        <strain>ATCC 29341 / DSM 671 / R1</strain>
    </source>
</reference>
<proteinExistence type="evidence at protein level"/>
<organism>
    <name type="scientific">Halobacterium salinarum (strain ATCC 29341 / DSM 671 / R1)</name>
    <dbReference type="NCBI Taxonomy" id="478009"/>
    <lineage>
        <taxon>Archaea</taxon>
        <taxon>Methanobacteriati</taxon>
        <taxon>Methanobacteriota</taxon>
        <taxon>Stenosarchaea group</taxon>
        <taxon>Halobacteria</taxon>
        <taxon>Halobacteriales</taxon>
        <taxon>Halobacteriaceae</taxon>
        <taxon>Halobacterium</taxon>
        <taxon>Halobacterium salinarum NRC-34001</taxon>
    </lineage>
</organism>
<keyword id="KW-1003">Cell membrane</keyword>
<keyword id="KW-0145">Chemotaxis</keyword>
<keyword id="KW-0472">Membrane</keyword>
<keyword id="KW-0488">Methylation</keyword>
<keyword id="KW-0677">Repeat</keyword>
<keyword id="KW-0807">Transducer</keyword>
<keyword id="KW-0812">Transmembrane</keyword>
<keyword id="KW-1133">Transmembrane helix</keyword>